<gene>
    <name type="primary">ptsM</name>
    <name type="synonym">ptsG</name>
    <name type="ordered locus">Cgl1360</name>
    <name type="ordered locus">cg1537</name>
</gene>
<accession>Q46072</accession>
<dbReference type="EC" id="2.7.1.191"/>
<dbReference type="EMBL" id="L18874">
    <property type="protein sequence ID" value="AAA53546.1"/>
    <property type="molecule type" value="Genomic_DNA"/>
</dbReference>
<dbReference type="EMBL" id="BA000036">
    <property type="protein sequence ID" value="BAB98753.1"/>
    <property type="molecule type" value="Genomic_DNA"/>
</dbReference>
<dbReference type="EMBL" id="BX927152">
    <property type="protein sequence ID" value="CAF21369.1"/>
    <property type="molecule type" value="Genomic_DNA"/>
</dbReference>
<dbReference type="RefSeq" id="NP_600576.1">
    <property type="nucleotide sequence ID" value="NC_003450.3"/>
</dbReference>
<dbReference type="RefSeq" id="WP_011014304.1">
    <property type="nucleotide sequence ID" value="NC_006958.1"/>
</dbReference>
<dbReference type="SMR" id="Q46072"/>
<dbReference type="STRING" id="196627.cg1537"/>
<dbReference type="KEGG" id="cgb:cg1537"/>
<dbReference type="KEGG" id="cgl:Cgl1360"/>
<dbReference type="PATRIC" id="fig|196627.13.peg.1327"/>
<dbReference type="eggNOG" id="COG1263">
    <property type="taxonomic scope" value="Bacteria"/>
</dbReference>
<dbReference type="eggNOG" id="COG1264">
    <property type="taxonomic scope" value="Bacteria"/>
</dbReference>
<dbReference type="eggNOG" id="COG2190">
    <property type="taxonomic scope" value="Bacteria"/>
</dbReference>
<dbReference type="HOGENOM" id="CLU_012312_2_1_11"/>
<dbReference type="OrthoDB" id="9797715at2"/>
<dbReference type="BioCyc" id="CORYNE:G18NG-10939-MONOMER"/>
<dbReference type="BRENDA" id="2.7.1.191">
    <property type="organism ID" value="960"/>
</dbReference>
<dbReference type="BRENDA" id="2.7.1.199">
    <property type="organism ID" value="960"/>
</dbReference>
<dbReference type="Proteomes" id="UP000000582">
    <property type="component" value="Chromosome"/>
</dbReference>
<dbReference type="Proteomes" id="UP000001009">
    <property type="component" value="Chromosome"/>
</dbReference>
<dbReference type="GO" id="GO:0005886">
    <property type="term" value="C:plasma membrane"/>
    <property type="evidence" value="ECO:0007669"/>
    <property type="project" value="UniProtKB-SubCell"/>
</dbReference>
<dbReference type="GO" id="GO:0016301">
    <property type="term" value="F:kinase activity"/>
    <property type="evidence" value="ECO:0007669"/>
    <property type="project" value="UniProtKB-KW"/>
</dbReference>
<dbReference type="GO" id="GO:0008982">
    <property type="term" value="F:protein-N(PI)-phosphohistidine-sugar phosphotransferase activity"/>
    <property type="evidence" value="ECO:0007669"/>
    <property type="project" value="InterPro"/>
</dbReference>
<dbReference type="GO" id="GO:0009401">
    <property type="term" value="P:phosphoenolpyruvate-dependent sugar phosphotransferase system"/>
    <property type="evidence" value="ECO:0007669"/>
    <property type="project" value="UniProtKB-KW"/>
</dbReference>
<dbReference type="CDD" id="cd00212">
    <property type="entry name" value="PTS_IIB_glc"/>
    <property type="match status" value="1"/>
</dbReference>
<dbReference type="FunFam" id="2.70.70.10:FF:000001">
    <property type="entry name" value="PTS system glucose-specific IIA component"/>
    <property type="match status" value="1"/>
</dbReference>
<dbReference type="Gene3D" id="2.70.70.10">
    <property type="entry name" value="Glucose Permease (Domain IIA)"/>
    <property type="match status" value="1"/>
</dbReference>
<dbReference type="Gene3D" id="3.30.1360.60">
    <property type="entry name" value="Glucose permease domain IIB"/>
    <property type="match status" value="1"/>
</dbReference>
<dbReference type="InterPro" id="IPR011055">
    <property type="entry name" value="Dup_hybrid_motif"/>
</dbReference>
<dbReference type="InterPro" id="IPR036878">
    <property type="entry name" value="Glu_permease_IIB"/>
</dbReference>
<dbReference type="InterPro" id="IPR018113">
    <property type="entry name" value="PTrfase_EIIB_Cys"/>
</dbReference>
<dbReference type="InterPro" id="IPR001127">
    <property type="entry name" value="PTS_EIIA_1_perm"/>
</dbReference>
<dbReference type="InterPro" id="IPR003352">
    <property type="entry name" value="PTS_EIIC"/>
</dbReference>
<dbReference type="InterPro" id="IPR013013">
    <property type="entry name" value="PTS_EIIC_1"/>
</dbReference>
<dbReference type="InterPro" id="IPR001996">
    <property type="entry name" value="PTS_IIB_1"/>
</dbReference>
<dbReference type="InterPro" id="IPR050558">
    <property type="entry name" value="PTS_Sugar-Specific_Components"/>
</dbReference>
<dbReference type="NCBIfam" id="TIGR00830">
    <property type="entry name" value="PTBA"/>
    <property type="match status" value="1"/>
</dbReference>
<dbReference type="PANTHER" id="PTHR30175">
    <property type="entry name" value="PHOSPHOTRANSFERASE SYSTEM TRANSPORT PROTEIN"/>
    <property type="match status" value="1"/>
</dbReference>
<dbReference type="PANTHER" id="PTHR30175:SF1">
    <property type="entry name" value="PTS SYSTEM ARBUTIN-, CELLOBIOSE-, AND SALICIN-SPECIFIC EIIBC COMPONENT-RELATED"/>
    <property type="match status" value="1"/>
</dbReference>
<dbReference type="Pfam" id="PF00358">
    <property type="entry name" value="PTS_EIIA_1"/>
    <property type="match status" value="1"/>
</dbReference>
<dbReference type="Pfam" id="PF00367">
    <property type="entry name" value="PTS_EIIB"/>
    <property type="match status" value="1"/>
</dbReference>
<dbReference type="Pfam" id="PF02378">
    <property type="entry name" value="PTS_EIIC"/>
    <property type="match status" value="1"/>
</dbReference>
<dbReference type="SUPFAM" id="SSF51261">
    <property type="entry name" value="Duplicated hybrid motif"/>
    <property type="match status" value="1"/>
</dbReference>
<dbReference type="SUPFAM" id="SSF55604">
    <property type="entry name" value="Glucose permease domain IIB"/>
    <property type="match status" value="1"/>
</dbReference>
<dbReference type="PROSITE" id="PS51093">
    <property type="entry name" value="PTS_EIIA_TYPE_1"/>
    <property type="match status" value="1"/>
</dbReference>
<dbReference type="PROSITE" id="PS00371">
    <property type="entry name" value="PTS_EIIA_TYPE_1_HIS"/>
    <property type="match status" value="1"/>
</dbReference>
<dbReference type="PROSITE" id="PS51098">
    <property type="entry name" value="PTS_EIIB_TYPE_1"/>
    <property type="match status" value="1"/>
</dbReference>
<dbReference type="PROSITE" id="PS01035">
    <property type="entry name" value="PTS_EIIB_TYPE_1_CYS"/>
    <property type="match status" value="1"/>
</dbReference>
<dbReference type="PROSITE" id="PS51103">
    <property type="entry name" value="PTS_EIIC_TYPE_1"/>
    <property type="match status" value="1"/>
</dbReference>
<organism>
    <name type="scientific">Corynebacterium glutamicum (strain ATCC 13032 / DSM 20300 / JCM 1318 / BCRC 11384 / CCUG 27702 / LMG 3730 / NBRC 12168 / NCIMB 10025 / NRRL B-2784 / 534)</name>
    <dbReference type="NCBI Taxonomy" id="196627"/>
    <lineage>
        <taxon>Bacteria</taxon>
        <taxon>Bacillati</taxon>
        <taxon>Actinomycetota</taxon>
        <taxon>Actinomycetes</taxon>
        <taxon>Mycobacteriales</taxon>
        <taxon>Corynebacteriaceae</taxon>
        <taxon>Corynebacterium</taxon>
    </lineage>
</organism>
<protein>
    <recommendedName>
        <fullName>PTS system mannose-specific EIIBCA component</fullName>
    </recommendedName>
    <alternativeName>
        <fullName>EII-Man/EIII-Man</fullName>
    </alternativeName>
    <alternativeName>
        <fullName>EIIBCA-Man</fullName>
    </alternativeName>
    <domain>
        <recommendedName>
            <fullName>Mannose-specific phosphotransferase enzyme IIB component</fullName>
            <ecNumber>2.7.1.191</ecNumber>
        </recommendedName>
        <alternativeName>
            <fullName>PTS system mannose-specific EIIB component</fullName>
        </alternativeName>
    </domain>
    <domain>
        <recommendedName>
            <fullName>Mannose permease IIC component</fullName>
        </recommendedName>
        <alternativeName>
            <fullName>PTS system mannose-specific EIIC component</fullName>
        </alternativeName>
    </domain>
    <domain>
        <recommendedName>
            <fullName>Mannose-specific phosphotransferase enzyme IIA component</fullName>
        </recommendedName>
        <alternativeName>
            <fullName>PTS system mannose-specific EIIA component</fullName>
        </alternativeName>
    </domain>
</protein>
<feature type="chain" id="PRO_0000186645" description="PTS system mannose-specific EIIBCA component">
    <location>
        <begin position="1"/>
        <end position="683"/>
    </location>
</feature>
<feature type="transmembrane region" description="Helical" evidence="3">
    <location>
        <begin position="126"/>
        <end position="146"/>
    </location>
</feature>
<feature type="transmembrane region" description="Helical" evidence="3">
    <location>
        <begin position="162"/>
        <end position="182"/>
    </location>
</feature>
<feature type="transmembrane region" description="Helical" evidence="3">
    <location>
        <begin position="193"/>
        <end position="213"/>
    </location>
</feature>
<feature type="transmembrane region" description="Helical" evidence="3">
    <location>
        <begin position="225"/>
        <end position="245"/>
    </location>
</feature>
<feature type="transmembrane region" description="Helical" evidence="3">
    <location>
        <begin position="260"/>
        <end position="280"/>
    </location>
</feature>
<feature type="transmembrane region" description="Helical" evidence="3">
    <location>
        <begin position="303"/>
        <end position="323"/>
    </location>
</feature>
<feature type="transmembrane region" description="Helical" evidence="3">
    <location>
        <begin position="344"/>
        <end position="364"/>
    </location>
</feature>
<feature type="transmembrane region" description="Helical" evidence="3">
    <location>
        <begin position="376"/>
        <end position="396"/>
    </location>
</feature>
<feature type="transmembrane region" description="Helical" evidence="3">
    <location>
        <begin position="409"/>
        <end position="429"/>
    </location>
</feature>
<feature type="transmembrane region" description="Helical" evidence="3">
    <location>
        <begin position="442"/>
        <end position="462"/>
    </location>
</feature>
<feature type="domain" description="PTS EIIB type-1" evidence="2">
    <location>
        <begin position="1"/>
        <end position="89"/>
    </location>
</feature>
<feature type="domain" description="PTS EIIC type-1" evidence="3">
    <location>
        <begin position="117"/>
        <end position="476"/>
    </location>
</feature>
<feature type="domain" description="PTS EIIA type-1" evidence="1">
    <location>
        <begin position="550"/>
        <end position="654"/>
    </location>
</feature>
<feature type="active site" description="Phosphocysteine intermediate; for EIIB activity" evidence="2">
    <location>
        <position position="28"/>
    </location>
</feature>
<feature type="active site" description="Tele-phosphohistidine intermediate; for EIIA activity" evidence="1">
    <location>
        <position position="602"/>
    </location>
</feature>
<proteinExistence type="predicted"/>
<sequence>MASKLTTTSQHILENLGGPDNITSMTHCATRLRFQVKDQSIVDQQEIDSDPSVLGVVPQGSTGMQVVMGGSVANYYQEILKLDGMKHFADGEATESSSKKEYGGVRGKYSWIDYAFEFLSDTFRPILWALLGASLIITLLVLADTFGLQDFRAPMDEQPDTYVFLHSMWRSVFYFLPIMVGATAARKLGANEWIGAAIPAALLTPEFLALGSAGDTVTVFGLPMVLNDYSGQVFPPLIAAIGLYWVEKGLKKIIPEAVQMVFVPFFSLLIMIPATAFLLGPFGIGVGNGISNLLEAINNFSPFILSIVIPLLYPFLVPLGLHWPLNAIMIQNINTLGYDFIQGPMGAWNFACFGLVTGVFLLSIKERNKAMRQVSLGGMLAGLLGGISEPSLYGVLLRFKKTYFRLLPGCLAGGIVMGIFDIKAYAFVFTSLLTIPAMDPWLGYTIGIAVAFFVSMFLVLALDYRSNEERDEARAKVAADKQAEEDLKAEANATPAAPVAAAGAGAGAGAGAAAGAATAVAAKPKLAAGEVVDIVSPLEGKAIPLSEVPDPIFAAGKLGPGIAIQPTGNTVVAPADATVILVQKSGHAVALRLDSGVEILVHVGLDTVQLGGEGFTVHVERRQQVKAGDPLITFDADFIRSKDLPLITPVVVSNAAKFGEIEGIPADQANSSTTVIKVNGKNE</sequence>
<name>PTN3B_CORGL</name>
<keyword id="KW-1003">Cell membrane</keyword>
<keyword id="KW-0418">Kinase</keyword>
<keyword id="KW-0472">Membrane</keyword>
<keyword id="KW-0598">Phosphotransferase system</keyword>
<keyword id="KW-1185">Reference proteome</keyword>
<keyword id="KW-0762">Sugar transport</keyword>
<keyword id="KW-0808">Transferase</keyword>
<keyword id="KW-0812">Transmembrane</keyword>
<keyword id="KW-1133">Transmembrane helix</keyword>
<keyword id="KW-0813">Transport</keyword>
<evidence type="ECO:0000255" key="1">
    <source>
        <dbReference type="PROSITE-ProRule" id="PRU00416"/>
    </source>
</evidence>
<evidence type="ECO:0000255" key="2">
    <source>
        <dbReference type="PROSITE-ProRule" id="PRU00421"/>
    </source>
</evidence>
<evidence type="ECO:0000255" key="3">
    <source>
        <dbReference type="PROSITE-ProRule" id="PRU00426"/>
    </source>
</evidence>
<evidence type="ECO:0000305" key="4"/>
<comment type="function">
    <text>The phosphoenolpyruvate-dependent sugar phosphotransferase system (sugar PTS), a major carbohydrate active -transport system, catalyzes the phosphorylation of incoming sugar substrates concomitantly with their translocation across the cell membrane. This system is involved in mannose transport.</text>
</comment>
<comment type="catalytic activity">
    <reaction>
        <text>D-mannose(out) + N(pros)-phospho-L-histidyl-[protein] = D-mannose 6-phosphate(in) + L-histidyl-[protein]</text>
        <dbReference type="Rhea" id="RHEA:49232"/>
        <dbReference type="Rhea" id="RHEA-COMP:9745"/>
        <dbReference type="Rhea" id="RHEA-COMP:9746"/>
        <dbReference type="ChEBI" id="CHEBI:4208"/>
        <dbReference type="ChEBI" id="CHEBI:29979"/>
        <dbReference type="ChEBI" id="CHEBI:58735"/>
        <dbReference type="ChEBI" id="CHEBI:64837"/>
        <dbReference type="EC" id="2.7.1.191"/>
    </reaction>
</comment>
<comment type="subcellular location">
    <subcellularLocation>
        <location evidence="4">Cell membrane</location>
        <topology evidence="4">Multi-pass membrane protein</topology>
    </subcellularLocation>
</comment>
<comment type="domain">
    <text>The EIIB domain is phosphorylated by phospho-EIIA on a cysteinyl or histidyl residue, depending on the transported sugar. Then, it transfers the phosphoryl group to the sugar substrate concomitantly with the sugar uptake processed by the EIIC domain.</text>
</comment>
<comment type="domain">
    <text>The EIIC domain forms the PTS system translocation channel and contains the specific substrate-binding site.</text>
</comment>
<comment type="domain">
    <text>The EIIA domain is phosphorylated by phospho-HPr on a histidyl residue. Then, it transfers the phosphoryl group to the EIIB domain.</text>
</comment>
<reference key="1">
    <citation type="journal article" date="1994" name="FEMS Microbiol. Lett.">
        <title>Nucleotide sequence of the gene encoding the Corynebacterium glutamicum mannose enzyme II and analyses of the deduced protein sequence.</title>
        <authorList>
            <person name="Lee J.K."/>
            <person name="Sung M.H."/>
            <person name="Yoon K.H."/>
            <person name="Yu J.H."/>
            <person name="Oh T.K."/>
        </authorList>
    </citation>
    <scope>NUCLEOTIDE SEQUENCE [GENOMIC DNA]</scope>
</reference>
<reference key="2">
    <citation type="journal article" date="2003" name="Appl. Microbiol. Biotechnol.">
        <title>The Corynebacterium glutamicum genome: features and impacts on biotechnological processes.</title>
        <authorList>
            <person name="Ikeda M."/>
            <person name="Nakagawa S."/>
        </authorList>
    </citation>
    <scope>NUCLEOTIDE SEQUENCE [LARGE SCALE GENOMIC DNA]</scope>
    <source>
        <strain>ATCC 13032 / DSM 20300 / JCM 1318 / BCRC 11384 / CCUG 27702 / LMG 3730 / NBRC 12168 / NCIMB 10025 / NRRL B-2784 / 534</strain>
    </source>
</reference>
<reference key="3">
    <citation type="journal article" date="2003" name="J. Biotechnol.">
        <title>The complete Corynebacterium glutamicum ATCC 13032 genome sequence and its impact on the production of L-aspartate-derived amino acids and vitamins.</title>
        <authorList>
            <person name="Kalinowski J."/>
            <person name="Bathe B."/>
            <person name="Bartels D."/>
            <person name="Bischoff N."/>
            <person name="Bott M."/>
            <person name="Burkovski A."/>
            <person name="Dusch N."/>
            <person name="Eggeling L."/>
            <person name="Eikmanns B.J."/>
            <person name="Gaigalat L."/>
            <person name="Goesmann A."/>
            <person name="Hartmann M."/>
            <person name="Huthmacher K."/>
            <person name="Kraemer R."/>
            <person name="Linke B."/>
            <person name="McHardy A.C."/>
            <person name="Meyer F."/>
            <person name="Moeckel B."/>
            <person name="Pfefferle W."/>
            <person name="Puehler A."/>
            <person name="Rey D.A."/>
            <person name="Rueckert C."/>
            <person name="Rupp O."/>
            <person name="Sahm H."/>
            <person name="Wendisch V.F."/>
            <person name="Wiegraebe I."/>
            <person name="Tauch A."/>
        </authorList>
    </citation>
    <scope>NUCLEOTIDE SEQUENCE [LARGE SCALE GENOMIC DNA]</scope>
    <source>
        <strain>ATCC 13032 / DSM 20300 / JCM 1318 / BCRC 11384 / CCUG 27702 / LMG 3730 / NBRC 12168 / NCIMB 10025 / NRRL B-2784 / 534</strain>
    </source>
</reference>